<accession>A3PTK2</accession>
<feature type="chain" id="PRO_1000009760" description="dCTP deaminase, dUMP-forming">
    <location>
        <begin position="1"/>
        <end position="190"/>
    </location>
</feature>
<feature type="region of interest" description="Disordered" evidence="2">
    <location>
        <begin position="162"/>
        <end position="184"/>
    </location>
</feature>
<feature type="compositionally biased region" description="Polar residues" evidence="2">
    <location>
        <begin position="171"/>
        <end position="184"/>
    </location>
</feature>
<feature type="active site" description="Proton donor/acceptor" evidence="1">
    <location>
        <position position="129"/>
    </location>
</feature>
<feature type="binding site" evidence="1">
    <location>
        <begin position="101"/>
        <end position="106"/>
    </location>
    <ligand>
        <name>dCTP</name>
        <dbReference type="ChEBI" id="CHEBI:61481"/>
    </ligand>
</feature>
<feature type="binding site" evidence="1">
    <location>
        <position position="119"/>
    </location>
    <ligand>
        <name>dCTP</name>
        <dbReference type="ChEBI" id="CHEBI:61481"/>
    </ligand>
</feature>
<feature type="binding site" evidence="1">
    <location>
        <begin position="127"/>
        <end position="129"/>
    </location>
    <ligand>
        <name>dCTP</name>
        <dbReference type="ChEBI" id="CHEBI:61481"/>
    </ligand>
</feature>
<feature type="binding site" evidence="1">
    <location>
        <position position="148"/>
    </location>
    <ligand>
        <name>dCTP</name>
        <dbReference type="ChEBI" id="CHEBI:61481"/>
    </ligand>
</feature>
<feature type="binding site" evidence="1">
    <location>
        <position position="162"/>
    </location>
    <ligand>
        <name>dCTP</name>
        <dbReference type="ChEBI" id="CHEBI:61481"/>
    </ligand>
</feature>
<feature type="binding site" evidence="1">
    <location>
        <position position="174"/>
    </location>
    <ligand>
        <name>dCTP</name>
        <dbReference type="ChEBI" id="CHEBI:61481"/>
    </ligand>
</feature>
<feature type="site" description="Important for bifunctional activity" evidence="1">
    <location>
        <begin position="116"/>
        <end position="117"/>
    </location>
</feature>
<proteinExistence type="inferred from homology"/>
<organism>
    <name type="scientific">Mycobacterium sp. (strain JLS)</name>
    <dbReference type="NCBI Taxonomy" id="164757"/>
    <lineage>
        <taxon>Bacteria</taxon>
        <taxon>Bacillati</taxon>
        <taxon>Actinomycetota</taxon>
        <taxon>Actinomycetes</taxon>
        <taxon>Mycobacteriales</taxon>
        <taxon>Mycobacteriaceae</taxon>
        <taxon>Mycobacterium</taxon>
    </lineage>
</organism>
<gene>
    <name evidence="1" type="primary">dcd</name>
    <name type="ordered locus">Mjls_0417</name>
</gene>
<name>DCDB_MYCSJ</name>
<protein>
    <recommendedName>
        <fullName evidence="1">dCTP deaminase, dUMP-forming</fullName>
        <ecNumber evidence="1">3.5.4.30</ecNumber>
    </recommendedName>
    <alternativeName>
        <fullName evidence="1">Bifunctional dCTP deaminase:dUTPase</fullName>
    </alternativeName>
    <alternativeName>
        <fullName evidence="1">DCD-DUT</fullName>
    </alternativeName>
</protein>
<comment type="function">
    <text evidence="1">Bifunctional enzyme that catalyzes both the deamination of dCTP to dUTP and the hydrolysis of dUTP to dUMP without releasing the toxic dUTP intermediate.</text>
</comment>
<comment type="catalytic activity">
    <reaction evidence="1">
        <text>dCTP + 2 H2O = dUMP + NH4(+) + diphosphate</text>
        <dbReference type="Rhea" id="RHEA:19205"/>
        <dbReference type="ChEBI" id="CHEBI:15377"/>
        <dbReference type="ChEBI" id="CHEBI:28938"/>
        <dbReference type="ChEBI" id="CHEBI:33019"/>
        <dbReference type="ChEBI" id="CHEBI:61481"/>
        <dbReference type="ChEBI" id="CHEBI:246422"/>
        <dbReference type="EC" id="3.5.4.30"/>
    </reaction>
</comment>
<comment type="pathway">
    <text evidence="1">Pyrimidine metabolism; dUMP biosynthesis; dUMP from dCTP: step 1/1.</text>
</comment>
<comment type="subunit">
    <text evidence="1">Homotrimer.</text>
</comment>
<comment type="similarity">
    <text evidence="1">Belongs to the dCTP deaminase family.</text>
</comment>
<dbReference type="EC" id="3.5.4.30" evidence="1"/>
<dbReference type="EMBL" id="CP000580">
    <property type="protein sequence ID" value="ABN96229.1"/>
    <property type="molecule type" value="Genomic_DNA"/>
</dbReference>
<dbReference type="SMR" id="A3PTK2"/>
<dbReference type="KEGG" id="mjl:Mjls_0417"/>
<dbReference type="HOGENOM" id="CLU_087476_2_1_11"/>
<dbReference type="BioCyc" id="MSP164757:G1G8C-423-MONOMER"/>
<dbReference type="UniPathway" id="UPA00610">
    <property type="reaction ID" value="UER00667"/>
</dbReference>
<dbReference type="GO" id="GO:0033973">
    <property type="term" value="F:dCTP deaminase (dUMP-forming) activity"/>
    <property type="evidence" value="ECO:0007669"/>
    <property type="project" value="UniProtKB-UniRule"/>
</dbReference>
<dbReference type="GO" id="GO:0008829">
    <property type="term" value="F:dCTP deaminase activity"/>
    <property type="evidence" value="ECO:0007669"/>
    <property type="project" value="InterPro"/>
</dbReference>
<dbReference type="GO" id="GO:0000166">
    <property type="term" value="F:nucleotide binding"/>
    <property type="evidence" value="ECO:0007669"/>
    <property type="project" value="UniProtKB-KW"/>
</dbReference>
<dbReference type="GO" id="GO:0006226">
    <property type="term" value="P:dUMP biosynthetic process"/>
    <property type="evidence" value="ECO:0007669"/>
    <property type="project" value="UniProtKB-UniRule"/>
</dbReference>
<dbReference type="GO" id="GO:0006229">
    <property type="term" value="P:dUTP biosynthetic process"/>
    <property type="evidence" value="ECO:0007669"/>
    <property type="project" value="InterPro"/>
</dbReference>
<dbReference type="GO" id="GO:0015949">
    <property type="term" value="P:nucleobase-containing small molecule interconversion"/>
    <property type="evidence" value="ECO:0007669"/>
    <property type="project" value="TreeGrafter"/>
</dbReference>
<dbReference type="CDD" id="cd07557">
    <property type="entry name" value="trimeric_dUTPase"/>
    <property type="match status" value="1"/>
</dbReference>
<dbReference type="FunFam" id="2.70.40.10:FF:000005">
    <property type="entry name" value="dCTP deaminase, dUMP-forming"/>
    <property type="match status" value="1"/>
</dbReference>
<dbReference type="Gene3D" id="2.70.40.10">
    <property type="match status" value="1"/>
</dbReference>
<dbReference type="HAMAP" id="MF_00146">
    <property type="entry name" value="dCTP_deaminase"/>
    <property type="match status" value="1"/>
</dbReference>
<dbReference type="InterPro" id="IPR011962">
    <property type="entry name" value="dCTP_deaminase"/>
</dbReference>
<dbReference type="InterPro" id="IPR036157">
    <property type="entry name" value="dUTPase-like_sf"/>
</dbReference>
<dbReference type="InterPro" id="IPR033704">
    <property type="entry name" value="dUTPase_trimeric"/>
</dbReference>
<dbReference type="NCBIfam" id="TIGR02274">
    <property type="entry name" value="dCTP_deam"/>
    <property type="match status" value="1"/>
</dbReference>
<dbReference type="PANTHER" id="PTHR42680">
    <property type="entry name" value="DCTP DEAMINASE"/>
    <property type="match status" value="1"/>
</dbReference>
<dbReference type="PANTHER" id="PTHR42680:SF3">
    <property type="entry name" value="DCTP DEAMINASE"/>
    <property type="match status" value="1"/>
</dbReference>
<dbReference type="Pfam" id="PF22769">
    <property type="entry name" value="DCD"/>
    <property type="match status" value="1"/>
</dbReference>
<dbReference type="SUPFAM" id="SSF51283">
    <property type="entry name" value="dUTPase-like"/>
    <property type="match status" value="1"/>
</dbReference>
<keyword id="KW-0378">Hydrolase</keyword>
<keyword id="KW-0546">Nucleotide metabolism</keyword>
<keyword id="KW-0547">Nucleotide-binding</keyword>
<evidence type="ECO:0000255" key="1">
    <source>
        <dbReference type="HAMAP-Rule" id="MF_00146"/>
    </source>
</evidence>
<evidence type="ECO:0000256" key="2">
    <source>
        <dbReference type="SAM" id="MobiDB-lite"/>
    </source>
</evidence>
<sequence>MLLSDRDIRAEIDAGRLGIDPFEDSLVQPSSVDVRLDTLFRVFNNTRYTHIDPAKQQDELTSLVEPSPGEPFVLHPGEFVLGSTLETCTLPDDLAGRLEGKSSLGRLGLLTHSTAGFIDPGFSGHITLELSNVANLPITLWPGMKIGQLCLLRLTSPAEHPYGSAKVGSKYQGQRGPTPSRSYQNFIKLS</sequence>
<reference key="1">
    <citation type="submission" date="2007-02" db="EMBL/GenBank/DDBJ databases">
        <title>Complete sequence of Mycobacterium sp. JLS.</title>
        <authorList>
            <consortium name="US DOE Joint Genome Institute"/>
            <person name="Copeland A."/>
            <person name="Lucas S."/>
            <person name="Lapidus A."/>
            <person name="Barry K."/>
            <person name="Detter J.C."/>
            <person name="Glavina del Rio T."/>
            <person name="Hammon N."/>
            <person name="Israni S."/>
            <person name="Dalin E."/>
            <person name="Tice H."/>
            <person name="Pitluck S."/>
            <person name="Chain P."/>
            <person name="Malfatti S."/>
            <person name="Shin M."/>
            <person name="Vergez L."/>
            <person name="Schmutz J."/>
            <person name="Larimer F."/>
            <person name="Land M."/>
            <person name="Hauser L."/>
            <person name="Kyrpides N."/>
            <person name="Mikhailova N."/>
            <person name="Miller C.D."/>
            <person name="Anderson A.J."/>
            <person name="Sims R.C."/>
            <person name="Richardson P."/>
        </authorList>
    </citation>
    <scope>NUCLEOTIDE SEQUENCE [LARGE SCALE GENOMIC DNA]</scope>
    <source>
        <strain>JLS</strain>
    </source>
</reference>